<accession>Q8E4G7</accession>
<keyword id="KW-0328">Glycosyltransferase</keyword>
<keyword id="KW-0694">RNA-binding</keyword>
<keyword id="KW-0804">Transcription</keyword>
<keyword id="KW-0805">Transcription regulation</keyword>
<keyword id="KW-0806">Transcription termination</keyword>
<keyword id="KW-0808">Transferase</keyword>
<feature type="chain" id="PRO_1000053866" description="Bifunctional protein PyrR">
    <location>
        <begin position="1"/>
        <end position="173"/>
    </location>
</feature>
<feature type="short sequence motif" description="PRPP-binding" evidence="1">
    <location>
        <begin position="93"/>
        <end position="105"/>
    </location>
</feature>
<evidence type="ECO:0000255" key="1">
    <source>
        <dbReference type="HAMAP-Rule" id="MF_01219"/>
    </source>
</evidence>
<sequence>MKRKEIIDDVTMKRAITRITYEIIERNKNLDNIVLAGIKTRGVFLAKRIQERLKQLENLDIPVGELDTKPFRDDMKVEVDTTTMPVDITDKDIILIDDVLYTGRTIRAAIDNLVSLGRPSRVSLAVLIDRGHRELPIRADYVGKNIPTSQFEEILVEVMEHDGYDRVSIIDPS</sequence>
<proteinExistence type="inferred from homology"/>
<dbReference type="EC" id="2.4.2.9" evidence="1"/>
<dbReference type="EMBL" id="AL766850">
    <property type="protein sequence ID" value="CAD47093.1"/>
    <property type="molecule type" value="Genomic_DNA"/>
</dbReference>
<dbReference type="RefSeq" id="WP_000823056.1">
    <property type="nucleotide sequence ID" value="NC_004368.1"/>
</dbReference>
<dbReference type="SMR" id="Q8E4G7"/>
<dbReference type="GeneID" id="66886230"/>
<dbReference type="KEGG" id="san:gbs1434"/>
<dbReference type="eggNOG" id="COG2065">
    <property type="taxonomic scope" value="Bacteria"/>
</dbReference>
<dbReference type="HOGENOM" id="CLU_094234_2_1_9"/>
<dbReference type="Proteomes" id="UP000000823">
    <property type="component" value="Chromosome"/>
</dbReference>
<dbReference type="GO" id="GO:0003723">
    <property type="term" value="F:RNA binding"/>
    <property type="evidence" value="ECO:0007669"/>
    <property type="project" value="UniProtKB-UniRule"/>
</dbReference>
<dbReference type="GO" id="GO:0004845">
    <property type="term" value="F:uracil phosphoribosyltransferase activity"/>
    <property type="evidence" value="ECO:0007669"/>
    <property type="project" value="UniProtKB-UniRule"/>
</dbReference>
<dbReference type="GO" id="GO:0006353">
    <property type="term" value="P:DNA-templated transcription termination"/>
    <property type="evidence" value="ECO:0007669"/>
    <property type="project" value="UniProtKB-UniRule"/>
</dbReference>
<dbReference type="CDD" id="cd06223">
    <property type="entry name" value="PRTases_typeI"/>
    <property type="match status" value="1"/>
</dbReference>
<dbReference type="FunFam" id="3.40.50.2020:FF:000020">
    <property type="entry name" value="Bifunctional protein PyrR"/>
    <property type="match status" value="1"/>
</dbReference>
<dbReference type="Gene3D" id="3.40.50.2020">
    <property type="match status" value="1"/>
</dbReference>
<dbReference type="HAMAP" id="MF_01219">
    <property type="entry name" value="PyrR"/>
    <property type="match status" value="1"/>
</dbReference>
<dbReference type="InterPro" id="IPR000836">
    <property type="entry name" value="PRibTrfase_dom"/>
</dbReference>
<dbReference type="InterPro" id="IPR029057">
    <property type="entry name" value="PRTase-like"/>
</dbReference>
<dbReference type="InterPro" id="IPR023050">
    <property type="entry name" value="PyrR"/>
</dbReference>
<dbReference type="InterPro" id="IPR050137">
    <property type="entry name" value="PyrR_bifunctional"/>
</dbReference>
<dbReference type="NCBIfam" id="NF003548">
    <property type="entry name" value="PRK05205.1-4"/>
    <property type="match status" value="1"/>
</dbReference>
<dbReference type="NCBIfam" id="NF003549">
    <property type="entry name" value="PRK05205.1-5"/>
    <property type="match status" value="1"/>
</dbReference>
<dbReference type="PANTHER" id="PTHR11608">
    <property type="entry name" value="BIFUNCTIONAL PROTEIN PYRR"/>
    <property type="match status" value="1"/>
</dbReference>
<dbReference type="PANTHER" id="PTHR11608:SF0">
    <property type="entry name" value="BIFUNCTIONAL PROTEIN PYRR"/>
    <property type="match status" value="1"/>
</dbReference>
<dbReference type="Pfam" id="PF00156">
    <property type="entry name" value="Pribosyltran"/>
    <property type="match status" value="1"/>
</dbReference>
<dbReference type="SUPFAM" id="SSF53271">
    <property type="entry name" value="PRTase-like"/>
    <property type="match status" value="1"/>
</dbReference>
<reference key="1">
    <citation type="journal article" date="2002" name="Mol. Microbiol.">
        <title>Genome sequence of Streptococcus agalactiae, a pathogen causing invasive neonatal disease.</title>
        <authorList>
            <person name="Glaser P."/>
            <person name="Rusniok C."/>
            <person name="Buchrieser C."/>
            <person name="Chevalier F."/>
            <person name="Frangeul L."/>
            <person name="Msadek T."/>
            <person name="Zouine M."/>
            <person name="Couve E."/>
            <person name="Lalioui L."/>
            <person name="Poyart C."/>
            <person name="Trieu-Cuot P."/>
            <person name="Kunst F."/>
        </authorList>
    </citation>
    <scope>NUCLEOTIDE SEQUENCE [LARGE SCALE GENOMIC DNA]</scope>
    <source>
        <strain>NEM316</strain>
    </source>
</reference>
<name>PYRR_STRA3</name>
<protein>
    <recommendedName>
        <fullName evidence="1">Bifunctional protein PyrR</fullName>
    </recommendedName>
    <domain>
        <recommendedName>
            <fullName evidence="1">Pyrimidine operon regulatory protein</fullName>
        </recommendedName>
    </domain>
    <domain>
        <recommendedName>
            <fullName evidence="1">Uracil phosphoribosyltransferase</fullName>
            <shortName evidence="1">UPRTase</shortName>
            <ecNumber evidence="1">2.4.2.9</ecNumber>
        </recommendedName>
    </domain>
</protein>
<gene>
    <name evidence="1" type="primary">pyrR</name>
    <name type="ordered locus">gbs1434</name>
</gene>
<organism>
    <name type="scientific">Streptococcus agalactiae serotype III (strain NEM316)</name>
    <dbReference type="NCBI Taxonomy" id="211110"/>
    <lineage>
        <taxon>Bacteria</taxon>
        <taxon>Bacillati</taxon>
        <taxon>Bacillota</taxon>
        <taxon>Bacilli</taxon>
        <taxon>Lactobacillales</taxon>
        <taxon>Streptococcaceae</taxon>
        <taxon>Streptococcus</taxon>
    </lineage>
</organism>
<comment type="function">
    <text evidence="1">Regulates transcriptional attenuation of the pyrimidine nucleotide (pyr) operon by binding in a uridine-dependent manner to specific sites on pyr mRNA. This disrupts an antiterminator hairpin in the RNA and favors formation of a downstream transcription terminator, leading to a reduced expression of downstream genes.</text>
</comment>
<comment type="function">
    <text evidence="1">Also displays a weak uracil phosphoribosyltransferase activity which is not physiologically significant.</text>
</comment>
<comment type="catalytic activity">
    <reaction evidence="1">
        <text>UMP + diphosphate = 5-phospho-alpha-D-ribose 1-diphosphate + uracil</text>
        <dbReference type="Rhea" id="RHEA:13017"/>
        <dbReference type="ChEBI" id="CHEBI:17568"/>
        <dbReference type="ChEBI" id="CHEBI:33019"/>
        <dbReference type="ChEBI" id="CHEBI:57865"/>
        <dbReference type="ChEBI" id="CHEBI:58017"/>
        <dbReference type="EC" id="2.4.2.9"/>
    </reaction>
</comment>
<comment type="subunit">
    <text evidence="1">Homodimer and homohexamer; in equilibrium.</text>
</comment>
<comment type="similarity">
    <text evidence="1">Belongs to the purine/pyrimidine phosphoribosyltransferase family. PyrR subfamily.</text>
</comment>